<keyword id="KW-0520">NAD</keyword>
<keyword id="KW-0808">Transferase</keyword>
<reference key="1">
    <citation type="journal article" date="2014" name="Stand. Genomic Sci.">
        <title>Complete genome sequence of Anabaena variabilis ATCC 29413.</title>
        <authorList>
            <person name="Thiel T."/>
            <person name="Pratte B.S."/>
            <person name="Zhong J."/>
            <person name="Goodwin L."/>
            <person name="Copeland A."/>
            <person name="Lucas S."/>
            <person name="Han C."/>
            <person name="Pitluck S."/>
            <person name="Land M.L."/>
            <person name="Kyrpides N.C."/>
            <person name="Woyke T."/>
        </authorList>
    </citation>
    <scope>NUCLEOTIDE SEQUENCE [LARGE SCALE GENOMIC DNA]</scope>
    <source>
        <strain>ATCC 29413 / PCC 7937</strain>
    </source>
</reference>
<comment type="function">
    <text evidence="1">Removes the 2'-phosphate from RNA via an intermediate in which the phosphate is ADP-ribosylated by NAD followed by a presumed transesterification to release the RNA and generate ADP-ribose 1''-2''-cyclic phosphate (APPR&gt;P). May function as an ADP-ribosylase.</text>
</comment>
<comment type="similarity">
    <text evidence="1">Belongs to the KptA/TPT1 family.</text>
</comment>
<sequence>MEQARQVKISKFLSKHLRHTPERLGLVLAPGGWVAVDELLSACASHQFPISRADLEQVVSNNDKQRFSFDETATKIRANQGHSVEVDLQLQPQLPPPILYHGTGEKSVPAILKSGLLKMSRHHVHLSKDIETARTVGIRHGKPVIFSVDAMVMYQSGFTFYCSDNGVYLVDHVPPEYLHMMN</sequence>
<organism>
    <name type="scientific">Trichormus variabilis (strain ATCC 29413 / PCC 7937)</name>
    <name type="common">Anabaena variabilis</name>
    <dbReference type="NCBI Taxonomy" id="240292"/>
    <lineage>
        <taxon>Bacteria</taxon>
        <taxon>Bacillati</taxon>
        <taxon>Cyanobacteriota</taxon>
        <taxon>Cyanophyceae</taxon>
        <taxon>Nostocales</taxon>
        <taxon>Nostocaceae</taxon>
        <taxon>Trichormus</taxon>
    </lineage>
</organism>
<proteinExistence type="inferred from homology"/>
<accession>Q3M450</accession>
<protein>
    <recommendedName>
        <fullName evidence="1">Probable RNA 2'-phosphotransferase</fullName>
        <ecNumber evidence="1">2.7.1.-</ecNumber>
    </recommendedName>
</protein>
<dbReference type="EC" id="2.7.1.-" evidence="1"/>
<dbReference type="EMBL" id="CP000117">
    <property type="protein sequence ID" value="ABA24236.1"/>
    <property type="molecule type" value="Genomic_DNA"/>
</dbReference>
<dbReference type="SMR" id="Q3M450"/>
<dbReference type="STRING" id="240292.Ava_4639"/>
<dbReference type="KEGG" id="ava:Ava_4639"/>
<dbReference type="eggNOG" id="COG1859">
    <property type="taxonomic scope" value="Bacteria"/>
</dbReference>
<dbReference type="HOGENOM" id="CLU_052998_4_0_3"/>
<dbReference type="Proteomes" id="UP000002533">
    <property type="component" value="Chromosome"/>
</dbReference>
<dbReference type="GO" id="GO:0003950">
    <property type="term" value="F:NAD+ poly-ADP-ribosyltransferase activity"/>
    <property type="evidence" value="ECO:0007669"/>
    <property type="project" value="InterPro"/>
</dbReference>
<dbReference type="GO" id="GO:0000215">
    <property type="term" value="F:tRNA 2'-phosphotransferase activity"/>
    <property type="evidence" value="ECO:0007669"/>
    <property type="project" value="TreeGrafter"/>
</dbReference>
<dbReference type="GO" id="GO:0006388">
    <property type="term" value="P:tRNA splicing, via endonucleolytic cleavage and ligation"/>
    <property type="evidence" value="ECO:0007669"/>
    <property type="project" value="UniProtKB-UniRule"/>
</dbReference>
<dbReference type="Gene3D" id="3.20.170.30">
    <property type="match status" value="1"/>
</dbReference>
<dbReference type="Gene3D" id="1.10.10.970">
    <property type="entry name" value="RNA 2'-phosphotransferase, Tpt1/KptA family, N-terminal domain"/>
    <property type="match status" value="1"/>
</dbReference>
<dbReference type="HAMAP" id="MF_00299">
    <property type="entry name" value="KptA"/>
    <property type="match status" value="1"/>
</dbReference>
<dbReference type="InterPro" id="IPR002745">
    <property type="entry name" value="Ptrans_KptA/Tpt1"/>
</dbReference>
<dbReference type="InterPro" id="IPR042081">
    <property type="entry name" value="RNA_2'-PTrans_C"/>
</dbReference>
<dbReference type="InterPro" id="IPR022928">
    <property type="entry name" value="RNA_2'-PTrans_KptA"/>
</dbReference>
<dbReference type="InterPro" id="IPR042080">
    <property type="entry name" value="RNA_2'-PTrans_N"/>
</dbReference>
<dbReference type="NCBIfam" id="NF002014">
    <property type="entry name" value="PRK00819.1-4"/>
    <property type="match status" value="1"/>
</dbReference>
<dbReference type="PANTHER" id="PTHR12684">
    <property type="entry name" value="PUTATIVE PHOSPHOTRANSFERASE"/>
    <property type="match status" value="1"/>
</dbReference>
<dbReference type="PANTHER" id="PTHR12684:SF2">
    <property type="entry name" value="TRNA 2'-PHOSPHOTRANSFERASE 1"/>
    <property type="match status" value="1"/>
</dbReference>
<dbReference type="Pfam" id="PF01885">
    <property type="entry name" value="PTS_2-RNA"/>
    <property type="match status" value="1"/>
</dbReference>
<dbReference type="SUPFAM" id="SSF56399">
    <property type="entry name" value="ADP-ribosylation"/>
    <property type="match status" value="1"/>
</dbReference>
<name>KPTA_TRIV2</name>
<evidence type="ECO:0000255" key="1">
    <source>
        <dbReference type="HAMAP-Rule" id="MF_00299"/>
    </source>
</evidence>
<feature type="chain" id="PRO_0000231949" description="Probable RNA 2'-phosphotransferase">
    <location>
        <begin position="1"/>
        <end position="182"/>
    </location>
</feature>
<gene>
    <name evidence="1" type="primary">kptA</name>
    <name type="ordered locus">Ava_4639</name>
</gene>